<evidence type="ECO:0000255" key="1">
    <source>
        <dbReference type="HAMAP-Rule" id="MF_01301"/>
    </source>
</evidence>
<evidence type="ECO:0000305" key="2"/>
<sequence>MLPMNRNTLGLAVTIATVFVSSTVTAEVDFHGYVRAGIGISGENGQQVRYQSNKVGRLGNEDDLYSEILLGKELYSQDGKSFYVDSMMALLSDGSNDFEGTNTSCELLKNSAGDVDDVSCDNDAEFAIRQFNVQAKGLIPSNPDAVSWAGKRYYQRHDIHISDFYYWDTSGSGAGVENLSVGTGKLSLAVLRQDSGDINVNNFDIRYAEIALWQDANLELGFNYGLINETDAQKAEVGEDPLMLTAEITMANVIGGLNKTIFQYATESYGEQMAGLGAGNSPDATSDDGIDGYRIINWGVIAPTKTWEIGHQIVYANSSFDSQDDHSIFNVVVRPMYKWDENMRTVFEGGWFTEEDNKVDSSGSKFTVAQAWSAGSSFWARPELRVYASYLKDYENDNAFGIGNDTEYNLGVQVEAWW</sequence>
<organism>
    <name type="scientific">Photobacterium profundum (strain SS9)</name>
    <dbReference type="NCBI Taxonomy" id="298386"/>
    <lineage>
        <taxon>Bacteria</taxon>
        <taxon>Pseudomonadati</taxon>
        <taxon>Pseudomonadota</taxon>
        <taxon>Gammaproteobacteria</taxon>
        <taxon>Vibrionales</taxon>
        <taxon>Vibrionaceae</taxon>
        <taxon>Photobacterium</taxon>
    </lineage>
</organism>
<proteinExistence type="inferred from homology"/>
<gene>
    <name evidence="1" type="primary">lamB</name>
    <name type="ordered locus">PBPRA2255</name>
</gene>
<comment type="function">
    <text evidence="1">Involved in the transport of maltose and maltodextrins.</text>
</comment>
<comment type="catalytic activity">
    <reaction evidence="1">
        <text>beta-maltose(in) = beta-maltose(out)</text>
        <dbReference type="Rhea" id="RHEA:29731"/>
        <dbReference type="ChEBI" id="CHEBI:18147"/>
    </reaction>
</comment>
<comment type="subunit">
    <text evidence="1">Homotrimer formed of three 18-stranded antiparallel beta-barrels, containing three independent channels.</text>
</comment>
<comment type="subcellular location">
    <subcellularLocation>
        <location evidence="1">Cell outer membrane</location>
        <topology evidence="1">Multi-pass membrane protein</topology>
    </subcellularLocation>
</comment>
<comment type="induction">
    <text evidence="1">By maltose.</text>
</comment>
<comment type="similarity">
    <text evidence="1">Belongs to the porin LamB (TC 1.B.3) family.</text>
</comment>
<comment type="sequence caution" evidence="2">
    <conflict type="erroneous initiation">
        <sequence resource="EMBL-CDS" id="CAG20641"/>
    </conflict>
</comment>
<reference key="1">
    <citation type="journal article" date="2005" name="Science">
        <title>Life at depth: Photobacterium profundum genome sequence and expression analysis.</title>
        <authorList>
            <person name="Vezzi A."/>
            <person name="Campanaro S."/>
            <person name="D'Angelo M."/>
            <person name="Simonato F."/>
            <person name="Vitulo N."/>
            <person name="Lauro F.M."/>
            <person name="Cestaro A."/>
            <person name="Malacrida G."/>
            <person name="Simionati B."/>
            <person name="Cannata N."/>
            <person name="Romualdi C."/>
            <person name="Bartlett D.H."/>
            <person name="Valle G."/>
        </authorList>
    </citation>
    <scope>NUCLEOTIDE SEQUENCE [LARGE SCALE GENOMIC DNA]</scope>
    <source>
        <strain>ATCC BAA-1253 / SS9</strain>
    </source>
</reference>
<accession>Q6LPY5</accession>
<keyword id="KW-0998">Cell outer membrane</keyword>
<keyword id="KW-0406">Ion transport</keyword>
<keyword id="KW-0472">Membrane</keyword>
<keyword id="KW-0626">Porin</keyword>
<keyword id="KW-1185">Reference proteome</keyword>
<keyword id="KW-0732">Signal</keyword>
<keyword id="KW-0762">Sugar transport</keyword>
<keyword id="KW-0812">Transmembrane</keyword>
<keyword id="KW-1134">Transmembrane beta strand</keyword>
<keyword id="KW-0813">Transport</keyword>
<feature type="signal peptide" evidence="1">
    <location>
        <begin position="1"/>
        <end position="26"/>
    </location>
</feature>
<feature type="chain" id="PRO_0000290222" description="Maltoporin">
    <location>
        <begin position="27"/>
        <end position="418"/>
    </location>
</feature>
<feature type="site" description="Greasy slide, important in sugar transport" evidence="1">
    <location>
        <position position="33"/>
    </location>
</feature>
<feature type="site" description="Greasy slide, important in sugar transport" evidence="1">
    <location>
        <position position="65"/>
    </location>
</feature>
<feature type="site" description="Important in sugar transport" evidence="1">
    <location>
        <position position="165"/>
    </location>
</feature>
<feature type="site" description="Greasy slide, important in sugar transport" evidence="1">
    <location>
        <position position="379"/>
    </location>
</feature>
<feature type="site" description="Greasy slide, important in sugar transport" evidence="1">
    <location>
        <position position="417"/>
    </location>
</feature>
<name>LAMB_PHOPR</name>
<dbReference type="EMBL" id="CR378670">
    <property type="protein sequence ID" value="CAG20641.1"/>
    <property type="status" value="ALT_INIT"/>
    <property type="molecule type" value="Genomic_DNA"/>
</dbReference>
<dbReference type="SMR" id="Q6LPY5"/>
<dbReference type="STRING" id="298386.PBPRA2255"/>
<dbReference type="KEGG" id="ppr:PBPRA2255"/>
<dbReference type="eggNOG" id="COG4580">
    <property type="taxonomic scope" value="Bacteria"/>
</dbReference>
<dbReference type="HOGENOM" id="CLU_032473_4_1_6"/>
<dbReference type="Proteomes" id="UP000000593">
    <property type="component" value="Chromosome 1"/>
</dbReference>
<dbReference type="GO" id="GO:0009279">
    <property type="term" value="C:cell outer membrane"/>
    <property type="evidence" value="ECO:0007669"/>
    <property type="project" value="UniProtKB-SubCell"/>
</dbReference>
<dbReference type="GO" id="GO:0046930">
    <property type="term" value="C:pore complex"/>
    <property type="evidence" value="ECO:0007669"/>
    <property type="project" value="UniProtKB-KW"/>
</dbReference>
<dbReference type="GO" id="GO:0042958">
    <property type="term" value="F:maltodextrin transmembrane transporter activity"/>
    <property type="evidence" value="ECO:0007669"/>
    <property type="project" value="InterPro"/>
</dbReference>
<dbReference type="GO" id="GO:0015481">
    <property type="term" value="F:maltose transporting porin activity"/>
    <property type="evidence" value="ECO:0007669"/>
    <property type="project" value="InterPro"/>
</dbReference>
<dbReference type="GO" id="GO:0006811">
    <property type="term" value="P:monoatomic ion transport"/>
    <property type="evidence" value="ECO:0007669"/>
    <property type="project" value="UniProtKB-KW"/>
</dbReference>
<dbReference type="CDD" id="cd01346">
    <property type="entry name" value="Maltoporin-like"/>
    <property type="match status" value="1"/>
</dbReference>
<dbReference type="Gene3D" id="2.40.170.10">
    <property type="entry name" value="Porin, LamB type"/>
    <property type="match status" value="1"/>
</dbReference>
<dbReference type="HAMAP" id="MF_01301">
    <property type="entry name" value="LamB"/>
    <property type="match status" value="1"/>
</dbReference>
<dbReference type="InterPro" id="IPR050286">
    <property type="entry name" value="G_neg_Bact_CarbUptk_Porin"/>
</dbReference>
<dbReference type="InterPro" id="IPR023738">
    <property type="entry name" value="Maltoporin"/>
</dbReference>
<dbReference type="InterPro" id="IPR003192">
    <property type="entry name" value="Porin_LamB"/>
</dbReference>
<dbReference type="InterPro" id="IPR036998">
    <property type="entry name" value="Porin_LamB_sf"/>
</dbReference>
<dbReference type="NCBIfam" id="NF006860">
    <property type="entry name" value="PRK09360.1"/>
    <property type="match status" value="1"/>
</dbReference>
<dbReference type="PANTHER" id="PTHR38762">
    <property type="entry name" value="CRYPTIC OUTER MEMBRANE PORIN BGLH-RELATED"/>
    <property type="match status" value="1"/>
</dbReference>
<dbReference type="PANTHER" id="PTHR38762:SF1">
    <property type="entry name" value="CRYPTIC OUTER MEMBRANE PORIN BGLH-RELATED"/>
    <property type="match status" value="1"/>
</dbReference>
<dbReference type="Pfam" id="PF02264">
    <property type="entry name" value="LamB"/>
    <property type="match status" value="1"/>
</dbReference>
<dbReference type="SUPFAM" id="SSF56935">
    <property type="entry name" value="Porins"/>
    <property type="match status" value="1"/>
</dbReference>
<protein>
    <recommendedName>
        <fullName evidence="1">Maltoporin</fullName>
    </recommendedName>
    <alternativeName>
        <fullName evidence="1">Maltose-inducible porin</fullName>
    </alternativeName>
</protein>